<keyword id="KW-1185">Reference proteome</keyword>
<dbReference type="EMBL" id="AE010299">
    <property type="protein sequence ID" value="AAM07347.1"/>
    <property type="molecule type" value="Genomic_DNA"/>
</dbReference>
<dbReference type="RefSeq" id="WP_011023892.1">
    <property type="nucleotide sequence ID" value="NC_003552.1"/>
</dbReference>
<dbReference type="SMR" id="Q8TIZ2"/>
<dbReference type="STRING" id="188937.MA_3997"/>
<dbReference type="EnsemblBacteria" id="AAM07347">
    <property type="protein sequence ID" value="AAM07347"/>
    <property type="gene ID" value="MA_3997"/>
</dbReference>
<dbReference type="GeneID" id="1475891"/>
<dbReference type="KEGG" id="mac:MA_3997"/>
<dbReference type="HOGENOM" id="CLU_533841_0_0_2"/>
<dbReference type="InParanoid" id="Q8TIZ2"/>
<dbReference type="OrthoDB" id="140355at2157"/>
<dbReference type="PhylomeDB" id="Q8TIZ2"/>
<dbReference type="Proteomes" id="UP000002487">
    <property type="component" value="Chromosome"/>
</dbReference>
<dbReference type="HAMAP" id="MF_01089">
    <property type="entry name" value="UPF0288"/>
    <property type="match status" value="1"/>
</dbReference>
<dbReference type="InterPro" id="IPR016466">
    <property type="entry name" value="Methan_mark_3"/>
</dbReference>
<dbReference type="NCBIfam" id="TIGR03268">
    <property type="entry name" value="methan_mark_3"/>
    <property type="match status" value="1"/>
</dbReference>
<dbReference type="PIRSF" id="PIRSF005852">
    <property type="entry name" value="UCP005852"/>
    <property type="match status" value="1"/>
</dbReference>
<reference key="1">
    <citation type="journal article" date="2002" name="Genome Res.">
        <title>The genome of Methanosarcina acetivorans reveals extensive metabolic and physiological diversity.</title>
        <authorList>
            <person name="Galagan J.E."/>
            <person name="Nusbaum C."/>
            <person name="Roy A."/>
            <person name="Endrizzi M.G."/>
            <person name="Macdonald P."/>
            <person name="FitzHugh W."/>
            <person name="Calvo S."/>
            <person name="Engels R."/>
            <person name="Smirnov S."/>
            <person name="Atnoor D."/>
            <person name="Brown A."/>
            <person name="Allen N."/>
            <person name="Naylor J."/>
            <person name="Stange-Thomann N."/>
            <person name="DeArellano K."/>
            <person name="Johnson R."/>
            <person name="Linton L."/>
            <person name="McEwan P."/>
            <person name="McKernan K."/>
            <person name="Talamas J."/>
            <person name="Tirrell A."/>
            <person name="Ye W."/>
            <person name="Zimmer A."/>
            <person name="Barber R.D."/>
            <person name="Cann I."/>
            <person name="Graham D.E."/>
            <person name="Grahame D.A."/>
            <person name="Guss A.M."/>
            <person name="Hedderich R."/>
            <person name="Ingram-Smith C."/>
            <person name="Kuettner H.C."/>
            <person name="Krzycki J.A."/>
            <person name="Leigh J.A."/>
            <person name="Li W."/>
            <person name="Liu J."/>
            <person name="Mukhopadhyay B."/>
            <person name="Reeve J.N."/>
            <person name="Smith K."/>
            <person name="Springer T.A."/>
            <person name="Umayam L.A."/>
            <person name="White O."/>
            <person name="White R.H."/>
            <person name="de Macario E.C."/>
            <person name="Ferry J.G."/>
            <person name="Jarrell K.F."/>
            <person name="Jing H."/>
            <person name="Macario A.J.L."/>
            <person name="Paulsen I.T."/>
            <person name="Pritchett M."/>
            <person name="Sowers K.R."/>
            <person name="Swanson R.V."/>
            <person name="Zinder S.H."/>
            <person name="Lander E."/>
            <person name="Metcalf W.W."/>
            <person name="Birren B."/>
        </authorList>
    </citation>
    <scope>NUCLEOTIDE SEQUENCE [LARGE SCALE GENOMIC DNA]</scope>
    <source>
        <strain>ATCC 35395 / DSM 2834 / JCM 12185 / C2A</strain>
    </source>
</reference>
<protein>
    <recommendedName>
        <fullName evidence="1">UPF0288 protein MA_3997</fullName>
    </recommendedName>
</protein>
<proteinExistence type="inferred from homology"/>
<name>Y3997_METAC</name>
<organism>
    <name type="scientific">Methanosarcina acetivorans (strain ATCC 35395 / DSM 2834 / JCM 12185 / C2A)</name>
    <dbReference type="NCBI Taxonomy" id="188937"/>
    <lineage>
        <taxon>Archaea</taxon>
        <taxon>Methanobacteriati</taxon>
        <taxon>Methanobacteriota</taxon>
        <taxon>Stenosarchaea group</taxon>
        <taxon>Methanomicrobia</taxon>
        <taxon>Methanosarcinales</taxon>
        <taxon>Methanosarcinaceae</taxon>
        <taxon>Methanosarcina</taxon>
    </lineage>
</organism>
<feature type="chain" id="PRO_0000156050" description="UPF0288 protein MA_3997">
    <location>
        <begin position="1"/>
        <end position="525"/>
    </location>
</feature>
<evidence type="ECO:0000255" key="1">
    <source>
        <dbReference type="HAMAP-Rule" id="MF_01089"/>
    </source>
</evidence>
<gene>
    <name type="ordered locus">MA_3997</name>
</gene>
<comment type="similarity">
    <text evidence="1">Belongs to the UPF0288 family.</text>
</comment>
<sequence length="525" mass="58332">MQITSNEISVEVNGQSYTLPAGSTLGDALEVSRASYIAGTAVGIIKRAAEKRTEEITEYAIKTPRGELRIELKDPESSSGKLWAEHYKEYEGTYIHWASPEALAFGPFEADIKPFHETGSFEAFDVVFGAGGFDPHNTHLIISRKRHVAEYGAPEDGVFATVVTGRNLIFRLSREDPILSIEPIIEWEQLAEKTCTTDLSTILEDEDSVFTYFEVELSRNSPKGAEHFYALTRKGTLSVDVTTSSFISDDTLREEPVPYENFELRKEGAISVRTVGYGTGRTYISREERPSSLVHSIVGQVITGIELIKLAEKGQKLSVESLPPQIVLLGHSFEEVEPVLTAIGIELVKEGYTEENAVIVKQDPPTTLEILGEAKVTAYGVPREKLIEVELYPERAPKSVDFFRHSLELKTKPVGKLPVHMIYDNTYLFKTEKEAVKYKEVLPENTPADTVLAGEIGITNQAAKRMGTIGVRLVDDDLFGPTGEKFSSTNIIGRILEPERLIGIEEGDAIYVSEVVRRKTDEQEN</sequence>
<accession>Q8TIZ2</accession>